<sequence>MQDNFTASSPSSSSSASGVAEDNLAARRRRLKFRANHRGTFETDILIGGFVEANADTMTAEELTDMENILEMPDPELTDWLFGRLPLPEEKATPMLRRMVEDSRIRRGG</sequence>
<evidence type="ECO:0000250" key="1">
    <source>
        <dbReference type="UniProtKB" id="G4V4G2"/>
    </source>
</evidence>
<evidence type="ECO:0000256" key="2">
    <source>
        <dbReference type="SAM" id="MobiDB-lite"/>
    </source>
</evidence>
<evidence type="ECO:0000269" key="3">
    <source>
    </source>
</evidence>
<evidence type="ECO:0000303" key="4">
    <source>
    </source>
</evidence>
<evidence type="ECO:0000305" key="5"/>
<organism>
    <name type="scientific">Acetobacter pasteurianus (strain NBRC 105184 / IFO 3283-01)</name>
    <dbReference type="NCBI Taxonomy" id="634452"/>
    <lineage>
        <taxon>Bacteria</taxon>
        <taxon>Pseudomonadati</taxon>
        <taxon>Pseudomonadota</taxon>
        <taxon>Alphaproteobacteria</taxon>
        <taxon>Acetobacterales</taxon>
        <taxon>Acetobacteraceae</taxon>
        <taxon>Acetobacter</taxon>
    </lineage>
</organism>
<comment type="function">
    <text evidence="1 3">An FAD assembly protein, which accelerates covalent attachment of the cofactor into other proteins (Probable). Plays an essential role in the assembly of succinate dehydrogenase (SDH, respiratory complex II), an enzyme complex that is a component of both the tricarboxylic acid cycle and the electron transport chain, and which couples the oxidation of succinate to fumarate with the reduction of ubiquinone (coenzyme Q) to ubiquinol (By similarity). Required for flavinylation of SdhA, when the SDH operon and this gene are overexpressed in G.oxydans. Flavinylation of SdhA is detected only in the presence of sdhE.</text>
</comment>
<comment type="subcellular location">
    <subcellularLocation>
        <location evidence="1">Cytoplasm</location>
    </subcellularLocation>
</comment>
<comment type="similarity">
    <text evidence="5">Belongs to the SdhE FAD assembly factor family.</text>
</comment>
<gene>
    <name evidence="4" type="primary">sdhE</name>
    <name type="ordered locus">APA01_11050</name>
</gene>
<dbReference type="EMBL" id="AP011121">
    <property type="protein sequence ID" value="BAH99254.1"/>
    <property type="molecule type" value="Genomic_DNA"/>
</dbReference>
<dbReference type="RefSeq" id="WP_003623435.1">
    <property type="nucleotide sequence ID" value="NC_013209.1"/>
</dbReference>
<dbReference type="SMR" id="C7JGP5"/>
<dbReference type="STRING" id="634452.APA01_11050"/>
<dbReference type="KEGG" id="apt:APA01_11050"/>
<dbReference type="eggNOG" id="COG2938">
    <property type="taxonomic scope" value="Bacteria"/>
</dbReference>
<dbReference type="HOGENOM" id="CLU_103054_1_0_5"/>
<dbReference type="BioCyc" id="APAS634452:APA01_RS05580-MONOMER"/>
<dbReference type="Proteomes" id="UP000000948">
    <property type="component" value="Chromosome"/>
</dbReference>
<dbReference type="GO" id="GO:0005737">
    <property type="term" value="C:cytoplasm"/>
    <property type="evidence" value="ECO:0007669"/>
    <property type="project" value="UniProtKB-SubCell"/>
</dbReference>
<dbReference type="GO" id="GO:0006099">
    <property type="term" value="P:tricarboxylic acid cycle"/>
    <property type="evidence" value="ECO:0007669"/>
    <property type="project" value="TreeGrafter"/>
</dbReference>
<dbReference type="Gene3D" id="1.10.150.250">
    <property type="entry name" value="Flavinator of succinate dehydrogenase"/>
    <property type="match status" value="1"/>
</dbReference>
<dbReference type="InterPro" id="IPR005631">
    <property type="entry name" value="SDH"/>
</dbReference>
<dbReference type="InterPro" id="IPR036714">
    <property type="entry name" value="SDH_sf"/>
</dbReference>
<dbReference type="PANTHER" id="PTHR12469">
    <property type="entry name" value="PROTEIN EMI5 HOMOLOG, MITOCHONDRIAL"/>
    <property type="match status" value="1"/>
</dbReference>
<dbReference type="PANTHER" id="PTHR12469:SF2">
    <property type="entry name" value="SUCCINATE DEHYDROGENASE ASSEMBLY FACTOR 2, MITOCHONDRIAL"/>
    <property type="match status" value="1"/>
</dbReference>
<dbReference type="Pfam" id="PF03937">
    <property type="entry name" value="Sdh5"/>
    <property type="match status" value="1"/>
</dbReference>
<dbReference type="SUPFAM" id="SSF109910">
    <property type="entry name" value="YgfY-like"/>
    <property type="match status" value="1"/>
</dbReference>
<name>SDHE_ACEP3</name>
<reference key="1">
    <citation type="journal article" date="2009" name="Nucleic Acids Res.">
        <title>Whole-genome analyses reveal genetic instability of Acetobacter pasteurianus.</title>
        <authorList>
            <person name="Azuma Y."/>
            <person name="Hosoyama A."/>
            <person name="Matsutani M."/>
            <person name="Furuya N."/>
            <person name="Horikawa H."/>
            <person name="Harada T."/>
            <person name="Hirakawa H."/>
            <person name="Kuhara S."/>
            <person name="Matsushita K."/>
            <person name="Fujita N."/>
            <person name="Shirai M."/>
        </authorList>
    </citation>
    <scope>NUCLEOTIDE SEQUENCE [LARGE SCALE GENOMIC DNA]</scope>
    <source>
        <strain>NBRC 105184 / IFO 3283-01</strain>
    </source>
</reference>
<reference key="2">
    <citation type="journal article" date="2015" name="Appl. Microbiol. Biotechnol.">
        <title>SdhE-dependent formation of a functional Acetobacter pasteurianus succinate dehydrogenase in Gluconobacter oxydans--a first step toward a complete tricarboxylic acid cycle.</title>
        <authorList>
            <person name="Kiefler I."/>
            <person name="Bringer S."/>
            <person name="Bott M."/>
        </authorList>
    </citation>
    <scope>FUNCTION</scope>
    <source>
        <strain>ATCC 33445 / DSM 3509 / LMD 22.1</strain>
    </source>
</reference>
<keyword id="KW-0143">Chaperone</keyword>
<keyword id="KW-0963">Cytoplasm</keyword>
<feature type="chain" id="PRO_0000438884" description="FAD assembly factor SdhE">
    <location>
        <begin position="1"/>
        <end position="109"/>
    </location>
</feature>
<feature type="region of interest" description="Disordered" evidence="2">
    <location>
        <begin position="1"/>
        <end position="22"/>
    </location>
</feature>
<feature type="compositionally biased region" description="Low complexity" evidence="2">
    <location>
        <begin position="7"/>
        <end position="17"/>
    </location>
</feature>
<protein>
    <recommendedName>
        <fullName evidence="4">FAD assembly factor SdhE</fullName>
    </recommendedName>
</protein>
<proteinExistence type="inferred from homology"/>
<accession>C7JGP5</accession>